<gene>
    <name evidence="1" type="primary">minC</name>
    <name type="ordered locus">XC_3121</name>
</gene>
<name>MINC_XANC8</name>
<comment type="function">
    <text evidence="1">Cell division inhibitor that blocks the formation of polar Z ring septums. Rapidly oscillates between the poles of the cell to destabilize FtsZ filaments that have formed before they mature into polar Z rings. Prevents FtsZ polymerization.</text>
</comment>
<comment type="subunit">
    <text evidence="1">Interacts with MinD and FtsZ.</text>
</comment>
<comment type="similarity">
    <text evidence="1">Belongs to the MinC family.</text>
</comment>
<proteinExistence type="inferred from homology"/>
<dbReference type="EMBL" id="CP000050">
    <property type="protein sequence ID" value="AAY50166.1"/>
    <property type="molecule type" value="Genomic_DNA"/>
</dbReference>
<dbReference type="RefSeq" id="WP_011269938.1">
    <property type="nucleotide sequence ID" value="NC_007086.1"/>
</dbReference>
<dbReference type="SMR" id="Q4US07"/>
<dbReference type="KEGG" id="xcb:XC_3121"/>
<dbReference type="HOGENOM" id="CLU_067812_0_1_6"/>
<dbReference type="Proteomes" id="UP000000420">
    <property type="component" value="Chromosome"/>
</dbReference>
<dbReference type="GO" id="GO:0000902">
    <property type="term" value="P:cell morphogenesis"/>
    <property type="evidence" value="ECO:0007669"/>
    <property type="project" value="InterPro"/>
</dbReference>
<dbReference type="GO" id="GO:0000917">
    <property type="term" value="P:division septum assembly"/>
    <property type="evidence" value="ECO:0007669"/>
    <property type="project" value="UniProtKB-KW"/>
</dbReference>
<dbReference type="GO" id="GO:0051302">
    <property type="term" value="P:regulation of cell division"/>
    <property type="evidence" value="ECO:0007669"/>
    <property type="project" value="InterPro"/>
</dbReference>
<dbReference type="GO" id="GO:1901891">
    <property type="term" value="P:regulation of cell septum assembly"/>
    <property type="evidence" value="ECO:0007669"/>
    <property type="project" value="InterPro"/>
</dbReference>
<dbReference type="Gene3D" id="2.160.20.70">
    <property type="match status" value="1"/>
</dbReference>
<dbReference type="Gene3D" id="3.30.70.260">
    <property type="match status" value="1"/>
</dbReference>
<dbReference type="HAMAP" id="MF_00267">
    <property type="entry name" value="MinC"/>
    <property type="match status" value="1"/>
</dbReference>
<dbReference type="InterPro" id="IPR016098">
    <property type="entry name" value="CAP/MinC_C"/>
</dbReference>
<dbReference type="InterPro" id="IPR013033">
    <property type="entry name" value="MinC"/>
</dbReference>
<dbReference type="InterPro" id="IPR036145">
    <property type="entry name" value="MinC_C_sf"/>
</dbReference>
<dbReference type="InterPro" id="IPR007874">
    <property type="entry name" value="MinC_N"/>
</dbReference>
<dbReference type="InterPro" id="IPR005526">
    <property type="entry name" value="Septum_form_inhib_MinC_C"/>
</dbReference>
<dbReference type="NCBIfam" id="TIGR01222">
    <property type="entry name" value="minC"/>
    <property type="match status" value="1"/>
</dbReference>
<dbReference type="PANTHER" id="PTHR34108">
    <property type="entry name" value="SEPTUM SITE-DETERMINING PROTEIN MINC"/>
    <property type="match status" value="1"/>
</dbReference>
<dbReference type="PANTHER" id="PTHR34108:SF1">
    <property type="entry name" value="SEPTUM SITE-DETERMINING PROTEIN MINC"/>
    <property type="match status" value="1"/>
</dbReference>
<dbReference type="Pfam" id="PF03775">
    <property type="entry name" value="MinC_C"/>
    <property type="match status" value="1"/>
</dbReference>
<dbReference type="Pfam" id="PF05209">
    <property type="entry name" value="MinC_N"/>
    <property type="match status" value="1"/>
</dbReference>
<dbReference type="SUPFAM" id="SSF63848">
    <property type="entry name" value="Cell-division inhibitor MinC, C-terminal domain"/>
    <property type="match status" value="1"/>
</dbReference>
<feature type="chain" id="PRO_1000047875" description="Probable septum site-determining protein MinC">
    <location>
        <begin position="1"/>
        <end position="249"/>
    </location>
</feature>
<feature type="region of interest" description="Disordered" evidence="2">
    <location>
        <begin position="117"/>
        <end position="138"/>
    </location>
</feature>
<organism>
    <name type="scientific">Xanthomonas campestris pv. campestris (strain 8004)</name>
    <dbReference type="NCBI Taxonomy" id="314565"/>
    <lineage>
        <taxon>Bacteria</taxon>
        <taxon>Pseudomonadati</taxon>
        <taxon>Pseudomonadota</taxon>
        <taxon>Gammaproteobacteria</taxon>
        <taxon>Lysobacterales</taxon>
        <taxon>Lysobacteraceae</taxon>
        <taxon>Xanthomonas</taxon>
    </lineage>
</organism>
<accession>Q4US07</accession>
<evidence type="ECO:0000255" key="1">
    <source>
        <dbReference type="HAMAP-Rule" id="MF_00267"/>
    </source>
</evidence>
<evidence type="ECO:0000256" key="2">
    <source>
        <dbReference type="SAM" id="MobiDB-lite"/>
    </source>
</evidence>
<keyword id="KW-0131">Cell cycle</keyword>
<keyword id="KW-0132">Cell division</keyword>
<keyword id="KW-0717">Septation</keyword>
<reference key="1">
    <citation type="journal article" date="2005" name="Genome Res.">
        <title>Comparative and functional genomic analyses of the pathogenicity of phytopathogen Xanthomonas campestris pv. campestris.</title>
        <authorList>
            <person name="Qian W."/>
            <person name="Jia Y."/>
            <person name="Ren S.-X."/>
            <person name="He Y.-Q."/>
            <person name="Feng J.-X."/>
            <person name="Lu L.-F."/>
            <person name="Sun Q."/>
            <person name="Ying G."/>
            <person name="Tang D.-J."/>
            <person name="Tang H."/>
            <person name="Wu W."/>
            <person name="Hao P."/>
            <person name="Wang L."/>
            <person name="Jiang B.-L."/>
            <person name="Zeng S."/>
            <person name="Gu W.-Y."/>
            <person name="Lu G."/>
            <person name="Rong L."/>
            <person name="Tian Y."/>
            <person name="Yao Z."/>
            <person name="Fu G."/>
            <person name="Chen B."/>
            <person name="Fang R."/>
            <person name="Qiang B."/>
            <person name="Chen Z."/>
            <person name="Zhao G.-P."/>
            <person name="Tang J.-L."/>
            <person name="He C."/>
        </authorList>
    </citation>
    <scope>NUCLEOTIDE SEQUENCE [LARGE SCALE GENOMIC DNA]</scope>
    <source>
        <strain>8004</strain>
    </source>
</reference>
<sequence>MSSVNVDFEQAGELKIGQVGIANLRIRTLDVPRLVREMQDRVTRAPKLFGRAAVILDFGGLAQAPDLATAKALLDGLRSAGVLPVALAYGTSEIDLLSQQLGIPLLAKFRAQYETAAVRPPQPPPPPHARAEPAAPVARPAPVRMQRNTVRSGQQLYAENCDLTVLSTVGAGAEVIADGSIHIYGTLRGRALAGAQGNPDARIFCRDFHAELVAIAGHYKVLDDVPMDLRGKAVQVWLEQDQIKIAALD</sequence>
<protein>
    <recommendedName>
        <fullName evidence="1">Probable septum site-determining protein MinC</fullName>
    </recommendedName>
</protein>